<reference key="1">
    <citation type="journal article" date="1991" name="Oncogene">
        <title>PCR-based identification of new receptors: molecular cloning of a receptor for fibroblast growth factors.</title>
        <authorList>
            <person name="Raz V."/>
            <person name="Kelman Z."/>
            <person name="Avivi A."/>
            <person name="Neufeld G."/>
            <person name="Givol D."/>
            <person name="Yarden Y."/>
        </authorList>
    </citation>
    <scope>NUCLEOTIDE SEQUENCE [MRNA] (ISOFORM LONG)</scope>
    <source>
        <strain>BALB/cJ</strain>
        <tissue>Brain</tissue>
    </source>
</reference>
<reference key="2">
    <citation type="journal article" date="1991" name="Science">
        <title>Expression cDNA cloning of the KGF receptor by creation of a transforming autocrine loop.</title>
        <authorList>
            <person name="Miki T."/>
            <person name="Fleming T.P."/>
            <person name="Bottaro D.P."/>
            <person name="Rubin J.S."/>
            <person name="Ron D."/>
            <person name="Aaronson S.A."/>
        </authorList>
    </citation>
    <scope>NUCLEOTIDE SEQUENCE [MRNA] (ISOFORM SHORT)</scope>
</reference>
<reference key="3">
    <citation type="journal article" date="1992" name="Proc. Natl. Acad. Sci. U.S.A.">
        <title>Characterization of the murine BEK fibroblast growth factor (FGF) receptor: activation by three members of the FGF family and requirement for heparin.</title>
        <authorList>
            <person name="Mansukhani A."/>
            <person name="Dell'Era P."/>
            <person name="Moscatelli D."/>
            <person name="Kornbluth S."/>
            <person name="Hanafusa H."/>
            <person name="Basilico C."/>
        </authorList>
    </citation>
    <scope>NUCLEOTIDE SEQUENCE [MRNA] (ISOFORM LONG)</scope>
    <source>
        <tissue>Brain</tissue>
        <tissue>Liver</tissue>
    </source>
</reference>
<reference key="4">
    <citation type="journal article" date="1998" name="Hum. Mol. Genet.">
        <title>Conserved use of a non-canonical 5' splice site (/GA) in alternative splicing by fibroblast growth factor receptors 1, 2 and 3.</title>
        <authorList>
            <person name="Twigg S.R.F."/>
            <person name="Burns H.D."/>
            <person name="Oldridge M."/>
            <person name="Heath J.K."/>
            <person name="Wilkie A.O.M."/>
        </authorList>
    </citation>
    <scope>NUCLEOTIDE SEQUENCE [GENOMIC DNA] (ISOFORM LONG)</scope>
</reference>
<reference key="5">
    <citation type="journal article" date="1988" name="Mol. Cell. Biol.">
        <title>Novel tyrosine kinase identified by phosphotyrosine antibody screening of cDNA libraries.</title>
        <authorList>
            <person name="Kornbluth S."/>
            <person name="Paulson K.E."/>
            <person name="Hanafusa H."/>
        </authorList>
    </citation>
    <scope>NUCLEOTIDE SEQUENCE [MRNA] OF 477-821</scope>
    <source>
        <tissue>Liver</tissue>
    </source>
</reference>
<reference key="6">
    <citation type="journal article" date="1993" name="Dev. Biol.">
        <title>Developmental localization of the splicing alternatives of fibroblast growth factor receptor-2 (FGFR2).</title>
        <authorList>
            <person name="Orr-Urtreger A."/>
            <person name="Bedford M.T."/>
            <person name="Burakova T."/>
            <person name="Arman E."/>
            <person name="Zimmer Y."/>
            <person name="Yayon A."/>
            <person name="Givol D."/>
            <person name="Lonai P."/>
        </authorList>
    </citation>
    <scope>FUNCTION</scope>
</reference>
<reference key="7">
    <citation type="journal article" date="1996" name="J. Biol. Chem.">
        <title>Receptor specificity of the fibroblast growth factor family.</title>
        <authorList>
            <person name="Ornitz D.M."/>
            <person name="Xu J."/>
            <person name="Colvin J.S."/>
            <person name="McEwen D.G."/>
            <person name="MacArthur C.A."/>
            <person name="Coulier F."/>
            <person name="Gao G."/>
            <person name="Goldfarb M."/>
        </authorList>
    </citation>
    <scope>INTERACTION WITH FGF1; FGF2; FGF3; FGF4; FGF6; FGF7 AND FGF9</scope>
    <scope>FUNCTION IN CELL PROLIFERATION</scope>
</reference>
<reference key="8">
    <citation type="journal article" date="1998" name="Development">
        <title>Fibroblast growth factor receptor 2 (FGFR2)-mediated reciprocal regulation loop between FGF8 and FGF10 is essential for limb induction.</title>
        <authorList>
            <person name="Xu X."/>
            <person name="Weinstein M."/>
            <person name="Li C."/>
            <person name="Naski M."/>
            <person name="Cohen R.I."/>
            <person name="Ornitz D.M."/>
            <person name="Leder P."/>
            <person name="Deng C."/>
        </authorList>
    </citation>
    <scope>DISRUPTION PHENOTYPE</scope>
</reference>
<reference key="9">
    <citation type="journal article" date="1998" name="Proc. Natl. Acad. Sci. U.S.A.">
        <title>Targeted disruption of fibroblast growth factor (FGF) receptor 2 suggests a role for FGF signaling in pregastrulation mammalian development.</title>
        <authorList>
            <person name="Arman E."/>
            <person name="Haffner-Krausz R."/>
            <person name="Chen Y."/>
            <person name="Heath J.K."/>
            <person name="Lonai P."/>
        </authorList>
    </citation>
    <scope>DISRUPTION PHENOTYPE</scope>
</reference>
<reference key="10">
    <citation type="journal article" date="1999" name="Proc. Natl. Acad. Sci. U.S.A.">
        <title>Fgfr2 is required for limb outgrowth and lung-branching morphogenesis.</title>
        <authorList>
            <person name="Arman E."/>
            <person name="Haffner-Krausz R."/>
            <person name="Gorivodsky M."/>
            <person name="Lonai P."/>
        </authorList>
    </citation>
    <scope>DISRUPTION PHENOTYPE</scope>
</reference>
<reference key="11">
    <citation type="journal article" date="2000" name="J. Cell Biol.">
        <title>Signaling by fibroblast growth factors (FGF) and fibroblast growth factor receptor 2 (FGFR2)-activating mutations blocks mineralization and induces apoptosis in osteoblasts.</title>
        <authorList>
            <person name="Mansukhani A."/>
            <person name="Bellosta P."/>
            <person name="Sahni M."/>
            <person name="Basilico C."/>
        </authorList>
    </citation>
    <scope>FUNCTION</scope>
</reference>
<reference key="12">
    <citation type="journal article" date="2002" name="Development">
        <title>The IIIc alternative of Fgfr2 is a positive regulator of bone formation.</title>
        <authorList>
            <person name="Eswarakumar V.P."/>
            <person name="Monsonego-Ornan E."/>
            <person name="Pines M."/>
            <person name="Antonopoulou I."/>
            <person name="Morriss-Kay G.M."/>
            <person name="Lonai P."/>
        </authorList>
    </citation>
    <scope>DISRUPTION PHENOTYPE</scope>
</reference>
<reference key="13">
    <citation type="journal article" date="2005" name="Biochem. Biophys. Res. Commun.">
        <title>Tyrosine 769 of the keratinocyte growth factor receptor is required for receptor signaling but not endocytosis.</title>
        <authorList>
            <person name="Ceridono M."/>
            <person name="Belleudi F."/>
            <person name="Ceccarelli S."/>
            <person name="Torrisi M.R."/>
        </authorList>
    </citation>
    <scope>FUNCTION IN CELL PROLIFERATION AND ACTIVATION OF SIGNALING PATHWAYS</scope>
    <scope>MUTAGENESIS OF TYR-769</scope>
    <scope>PHOSPHORYLATION AT TYR-769</scope>
    <scope>INTERACTION WITH PLCG1</scope>
</reference>
<reference key="14">
    <citation type="journal article" date="2011" name="J. Dent. Res.">
        <title>Mouse FLRT2 interacts with the extracellular and intracellular regions of FGFR2.</title>
        <authorList>
            <person name="Wei K."/>
            <person name="Xu Y."/>
            <person name="Tse H."/>
            <person name="Manolson M.F."/>
            <person name="Gong S.G."/>
        </authorList>
    </citation>
    <scope>INTERACTION WITH FLRT2</scope>
</reference>
<proteinExistence type="evidence at protein level"/>
<comment type="function">
    <text evidence="9 11 13 14">Tyrosine-protein kinase that acts as a cell-surface receptor for fibroblast growth factors and plays an essential role in the regulation of cell proliferation, differentiation, migration and apoptosis, and in the regulation of embryonic development. Required for normal embryonic patterning, trophoblast function, limb bud development, lung morphogenesis, osteogenesis and skin development. Plays an essential role in the regulation of osteoblast differentiation, proliferation and apoptosis, and is required for normal skeleton development. Promotes cell proliferation in keratinocytes and immature osteoblasts, but promotes apoptosis in differentiated osteoblasts. Phosphorylates PLCG1, FRS2 and PAK4. Ligand binding leads to the activation of several signaling cascades. Activation of PLCG1 leads to the production of the cellular signaling molecules diacylglycerol and inositol 1,4,5-trisphosphate. Phosphorylation of FRS2 triggers recruitment of GRB2, GAB1, PIK3R1 and SOS1, and mediates activation of RAS, MAPK1/ERK2, MAPK3/ERK1 and the MAP kinase signaling pathway, as well as of the AKT1 signaling pathway. FGFR2 signaling is down-regulated by ubiquitination, internalization and degradation. Mutations that lead to constitutive kinase activation or impair normal FGFR2 maturation, internalization and degradation lead to aberrant signaling. Over-expressed FGFR2 promotes activation of STAT1.</text>
</comment>
<comment type="catalytic activity">
    <reaction evidence="6">
        <text>L-tyrosyl-[protein] + ATP = O-phospho-L-tyrosyl-[protein] + ADP + H(+)</text>
        <dbReference type="Rhea" id="RHEA:10596"/>
        <dbReference type="Rhea" id="RHEA-COMP:10136"/>
        <dbReference type="Rhea" id="RHEA-COMP:20101"/>
        <dbReference type="ChEBI" id="CHEBI:15378"/>
        <dbReference type="ChEBI" id="CHEBI:30616"/>
        <dbReference type="ChEBI" id="CHEBI:46858"/>
        <dbReference type="ChEBI" id="CHEBI:61978"/>
        <dbReference type="ChEBI" id="CHEBI:456216"/>
        <dbReference type="EC" id="2.7.10.1"/>
    </reaction>
</comment>
<comment type="activity regulation">
    <text evidence="1">Present in an inactive conformation in the absence of bound ligand. Ligand binding leads to dimerization and activation by autophosphorylation on tyrosine residues (By similarity).</text>
</comment>
<comment type="subunit">
    <text evidence="2 11 12 14">Monomer. Homodimer after ligand binding. Interacts predominantly with FGF1 and FGF2, but can also interact with FGF3, FGF4, FGF6, FGF7, FGF8, FGF9, FGF10, FGF17, FGF18 and FGF22 (in vitro) (PubMed:8663044). Ligand specificity is determined by tissue-specific expression of isoforms, and differences in the third Ig-like domain are crucial for ligand specificity. Affinity for fibroblast growth factors (FGFs) is increased by heparan sulfate glycosaminoglycans that function as coreceptors. Likewise, KLB increases the affinity for FGF19 and FGF21. Interacts with PLCG1 (PubMed:15629145). Interacts with GRB2 and PAK4 (By similarity). Interacts with FLRT2 (PubMed:21765038).</text>
</comment>
<comment type="subcellular location">
    <subcellularLocation>
        <location>Cell membrane</location>
        <topology>Single-pass type I membrane protein</topology>
    </subcellularLocation>
    <subcellularLocation>
        <location evidence="1">Golgi apparatus</location>
    </subcellularLocation>
    <subcellularLocation>
        <location evidence="1">Cytoplasmic vesicle</location>
    </subcellularLocation>
    <text evidence="1">Detected on osteoblast plasma membrane lipid rafts. After ligand binding, the activated receptor is rapidly internalized and degraded (By similarity).</text>
</comment>
<comment type="alternative products">
    <event type="alternative splicing"/>
    <isoform>
        <id>P21803-1</id>
        <name>Long</name>
        <sequence type="displayed"/>
    </isoform>
    <isoform>
        <id>P21803-2</id>
        <name>Short</name>
        <sequence type="described" ref="VSP_002985 VSP_002986 VSP_002987"/>
    </isoform>
</comment>
<comment type="domain">
    <text evidence="1">The second and third Ig-like domains directly interact with fibroblast growth factors (FGF) and heparan sulfate proteoglycans. Alternative splicing events affecting the third Ig-like domain are crucial for ligand selectivity (By similarity).</text>
</comment>
<comment type="PTM">
    <text evidence="1">Autophosphorylated. Binding of FGF family members together with heparan sulfate proteoglycan or heparin promotes receptor dimerization and autophosphorylation on tyrosine residues. Autophosphorylation occurs in trans between the two FGFR molecules present in the dimer (By similarity).</text>
</comment>
<comment type="PTM">
    <text evidence="1">N-glycosylated in the endoplasmic reticulum. The N-glycan chains undergo further maturation to an Endo H-resistant form in the Golgi apparatus (By similarity).</text>
</comment>
<comment type="PTM">
    <text evidence="1">Ubiquitinated. FGFR2 is rapidly ubiquitinated after autophosphorylation, leading to internalization and degradation. Subject to degradation both in lysosomes and by the proteasome (By similarity).</text>
</comment>
<comment type="disruption phenotype">
    <text evidence="8 10 15 16">Embryonic lethality shortly after implantation, due to trophoblast defects, absence of a functional placenta, failure of limb bud formation, plus defects in lung branching and heart development.</text>
</comment>
<comment type="similarity">
    <text evidence="5">Belongs to the protein kinase superfamily. Tyr protein kinase family. Fibroblast growth factor receptor subfamily.</text>
</comment>
<dbReference type="EC" id="2.7.10.1"/>
<dbReference type="EMBL" id="X55441">
    <property type="protein sequence ID" value="CAA39083.1"/>
    <property type="molecule type" value="mRNA"/>
</dbReference>
<dbReference type="EMBL" id="M63503">
    <property type="protein sequence ID" value="AAA39377.1"/>
    <property type="molecule type" value="mRNA"/>
</dbReference>
<dbReference type="EMBL" id="M86441">
    <property type="protein sequence ID" value="AAA37286.1"/>
    <property type="molecule type" value="mRNA"/>
</dbReference>
<dbReference type="EMBL" id="Y16152">
    <property type="protein sequence ID" value="CAA76098.1"/>
    <property type="molecule type" value="Genomic_DNA"/>
</dbReference>
<dbReference type="EMBL" id="Y16167">
    <property type="protein sequence ID" value="CAA76099.1"/>
    <property type="molecule type" value="Genomic_DNA"/>
</dbReference>
<dbReference type="EMBL" id="M23362">
    <property type="protein sequence ID" value="AAA37285.1"/>
    <property type="molecule type" value="mRNA"/>
</dbReference>
<dbReference type="PIR" id="A38429">
    <property type="entry name" value="A38429"/>
</dbReference>
<dbReference type="PIR" id="A44142">
    <property type="entry name" value="TVMSBK"/>
</dbReference>
<dbReference type="PIR" id="S17295">
    <property type="entry name" value="S17295"/>
</dbReference>
<dbReference type="RefSeq" id="NP_034337.2">
    <property type="nucleotide sequence ID" value="NM_010207.2"/>
</dbReference>
<dbReference type="RefSeq" id="NP_963895.2">
    <property type="nucleotide sequence ID" value="NM_201601.2"/>
</dbReference>
<dbReference type="PDB" id="4HWU">
    <property type="method" value="X-ray"/>
    <property type="resolution" value="2.90 A"/>
    <property type="chains" value="A/B=45-127"/>
</dbReference>
<dbReference type="PDBsum" id="4HWU"/>
<dbReference type="SMR" id="P21803"/>
<dbReference type="BioGRID" id="199657">
    <property type="interactions" value="22"/>
</dbReference>
<dbReference type="DIP" id="DIP-6038N"/>
<dbReference type="FunCoup" id="P21803">
    <property type="interactions" value="1325"/>
</dbReference>
<dbReference type="IntAct" id="P21803">
    <property type="interactions" value="2"/>
</dbReference>
<dbReference type="STRING" id="10090.ENSMUSP00000112430"/>
<dbReference type="ChEMBL" id="CHEMBL3648"/>
<dbReference type="GlyCosmos" id="P21803">
    <property type="glycosylation" value="9 sites, No reported glycans"/>
</dbReference>
<dbReference type="GlyGen" id="P21803">
    <property type="glycosylation" value="10 sites, 3 N-linked glycans (3 sites), 1 O-linked glycan (1 site)"/>
</dbReference>
<dbReference type="iPTMnet" id="P21803"/>
<dbReference type="PhosphoSitePlus" id="P21803"/>
<dbReference type="CPTAC" id="non-CPTAC-3806"/>
<dbReference type="jPOST" id="P21803"/>
<dbReference type="PaxDb" id="10090-ENSMUSP00000112430"/>
<dbReference type="ProteomicsDB" id="271890">
    <molecule id="P21803-1"/>
</dbReference>
<dbReference type="ProteomicsDB" id="271891">
    <molecule id="P21803-2"/>
</dbReference>
<dbReference type="Pumba" id="P21803"/>
<dbReference type="ABCD" id="P21803">
    <property type="antibodies" value="1 sequenced antibody"/>
</dbReference>
<dbReference type="DNASU" id="14183"/>
<dbReference type="GeneID" id="14183"/>
<dbReference type="KEGG" id="mmu:14183"/>
<dbReference type="AGR" id="MGI:95523"/>
<dbReference type="CTD" id="2263"/>
<dbReference type="MGI" id="MGI:95523">
    <property type="gene designation" value="Fgfr2"/>
</dbReference>
<dbReference type="eggNOG" id="KOG0200">
    <property type="taxonomic scope" value="Eukaryota"/>
</dbReference>
<dbReference type="InParanoid" id="P21803"/>
<dbReference type="OrthoDB" id="5984265at2759"/>
<dbReference type="PhylomeDB" id="P21803"/>
<dbReference type="BRENDA" id="2.7.10.1">
    <property type="organism ID" value="3474"/>
</dbReference>
<dbReference type="Reactome" id="R-MMU-109704">
    <property type="pathway name" value="PI3K Cascade"/>
</dbReference>
<dbReference type="Reactome" id="R-MMU-1257604">
    <property type="pathway name" value="PIP3 activates AKT signaling"/>
</dbReference>
<dbReference type="Reactome" id="R-MMU-190375">
    <property type="pathway name" value="FGFR2c ligand binding and activation"/>
</dbReference>
<dbReference type="Reactome" id="R-MMU-190377">
    <property type="pathway name" value="FGFR2b ligand binding and activation"/>
</dbReference>
<dbReference type="Reactome" id="R-MMU-5654221">
    <property type="pathway name" value="Phospholipase C-mediated cascade, FGFR2"/>
</dbReference>
<dbReference type="Reactome" id="R-MMU-5654695">
    <property type="pathway name" value="PI-3K cascade:FGFR2"/>
</dbReference>
<dbReference type="Reactome" id="R-MMU-5654699">
    <property type="pathway name" value="SHC-mediated cascade:FGFR2"/>
</dbReference>
<dbReference type="Reactome" id="R-MMU-5654700">
    <property type="pathway name" value="FRS-mediated FGFR2 signaling"/>
</dbReference>
<dbReference type="Reactome" id="R-MMU-5654727">
    <property type="pathway name" value="Negative regulation of FGFR2 signaling"/>
</dbReference>
<dbReference type="Reactome" id="R-MMU-5673001">
    <property type="pathway name" value="RAF/MAP kinase cascade"/>
</dbReference>
<dbReference type="Reactome" id="R-MMU-6811558">
    <property type="pathway name" value="PI5P, PP2A and IER3 Regulate PI3K/AKT Signaling"/>
</dbReference>
<dbReference type="BioGRID-ORCS" id="14183">
    <property type="hits" value="5 hits in 79 CRISPR screens"/>
</dbReference>
<dbReference type="ChiTaRS" id="Fgfr2">
    <property type="organism name" value="mouse"/>
</dbReference>
<dbReference type="EvolutionaryTrace" id="P21803"/>
<dbReference type="PRO" id="PR:P21803"/>
<dbReference type="Proteomes" id="UP000000589">
    <property type="component" value="Unplaced"/>
</dbReference>
<dbReference type="RNAct" id="P21803">
    <property type="molecule type" value="protein"/>
</dbReference>
<dbReference type="GO" id="GO:0031410">
    <property type="term" value="C:cytoplasmic vesicle"/>
    <property type="evidence" value="ECO:0007669"/>
    <property type="project" value="UniProtKB-KW"/>
</dbReference>
<dbReference type="GO" id="GO:0060076">
    <property type="term" value="C:excitatory synapse"/>
    <property type="evidence" value="ECO:0000315"/>
    <property type="project" value="UniProtKB"/>
</dbReference>
<dbReference type="GO" id="GO:0005576">
    <property type="term" value="C:extracellular region"/>
    <property type="evidence" value="ECO:0000304"/>
    <property type="project" value="MGI"/>
</dbReference>
<dbReference type="GO" id="GO:0005794">
    <property type="term" value="C:Golgi apparatus"/>
    <property type="evidence" value="ECO:0007669"/>
    <property type="project" value="UniProtKB-SubCell"/>
</dbReference>
<dbReference type="GO" id="GO:0005634">
    <property type="term" value="C:nucleus"/>
    <property type="evidence" value="ECO:0000314"/>
    <property type="project" value="MGI"/>
</dbReference>
<dbReference type="GO" id="GO:0005886">
    <property type="term" value="C:plasma membrane"/>
    <property type="evidence" value="ECO:0007669"/>
    <property type="project" value="UniProtKB-SubCell"/>
</dbReference>
<dbReference type="GO" id="GO:0005524">
    <property type="term" value="F:ATP binding"/>
    <property type="evidence" value="ECO:0007669"/>
    <property type="project" value="UniProtKB-KW"/>
</dbReference>
<dbReference type="GO" id="GO:0017134">
    <property type="term" value="F:fibroblast growth factor binding"/>
    <property type="evidence" value="ECO:0000314"/>
    <property type="project" value="MGI"/>
</dbReference>
<dbReference type="GO" id="GO:0005007">
    <property type="term" value="F:fibroblast growth factor receptor activity"/>
    <property type="evidence" value="ECO:0000266"/>
    <property type="project" value="MGI"/>
</dbReference>
<dbReference type="GO" id="GO:0008201">
    <property type="term" value="F:heparin binding"/>
    <property type="evidence" value="ECO:0007669"/>
    <property type="project" value="UniProtKB-KW"/>
</dbReference>
<dbReference type="GO" id="GO:0001525">
    <property type="term" value="P:angiogenesis"/>
    <property type="evidence" value="ECO:0000316"/>
    <property type="project" value="MGI"/>
</dbReference>
<dbReference type="GO" id="GO:0009887">
    <property type="term" value="P:animal organ morphogenesis"/>
    <property type="evidence" value="ECO:0000315"/>
    <property type="project" value="MGI"/>
</dbReference>
<dbReference type="GO" id="GO:0007409">
    <property type="term" value="P:axonogenesis"/>
    <property type="evidence" value="ECO:0000315"/>
    <property type="project" value="MGI"/>
</dbReference>
<dbReference type="GO" id="GO:0060348">
    <property type="term" value="P:bone development"/>
    <property type="evidence" value="ECO:0000315"/>
    <property type="project" value="MGI"/>
</dbReference>
<dbReference type="GO" id="GO:0030282">
    <property type="term" value="P:bone mineralization"/>
    <property type="evidence" value="ECO:0000315"/>
    <property type="project" value="MGI"/>
</dbReference>
<dbReference type="GO" id="GO:0060349">
    <property type="term" value="P:bone morphogenesis"/>
    <property type="evidence" value="ECO:0000315"/>
    <property type="project" value="MGI"/>
</dbReference>
<dbReference type="GO" id="GO:0060667">
    <property type="term" value="P:branch elongation involved in salivary gland morphogenesis"/>
    <property type="evidence" value="ECO:0000315"/>
    <property type="project" value="MGI"/>
</dbReference>
<dbReference type="GO" id="GO:0060670">
    <property type="term" value="P:branching involved in labyrinthine layer morphogenesis"/>
    <property type="evidence" value="ECO:0000315"/>
    <property type="project" value="MGI"/>
</dbReference>
<dbReference type="GO" id="GO:0060442">
    <property type="term" value="P:branching involved in prostate gland morphogenesis"/>
    <property type="evidence" value="ECO:0000315"/>
    <property type="project" value="MGI"/>
</dbReference>
<dbReference type="GO" id="GO:0060445">
    <property type="term" value="P:branching involved in salivary gland morphogenesis"/>
    <property type="evidence" value="ECO:0000315"/>
    <property type="project" value="MGI"/>
</dbReference>
<dbReference type="GO" id="GO:0048755">
    <property type="term" value="P:branching morphogenesis of a nerve"/>
    <property type="evidence" value="ECO:0000315"/>
    <property type="project" value="MGI"/>
</dbReference>
<dbReference type="GO" id="GO:0060449">
    <property type="term" value="P:bud elongation involved in lung branching"/>
    <property type="evidence" value="ECO:0000315"/>
    <property type="project" value="MGI"/>
</dbReference>
<dbReference type="GO" id="GO:0060070">
    <property type="term" value="P:canonical Wnt signaling pathway"/>
    <property type="evidence" value="ECO:0000316"/>
    <property type="project" value="MGI"/>
</dbReference>
<dbReference type="GO" id="GO:0060038">
    <property type="term" value="P:cardiac muscle cell proliferation"/>
    <property type="evidence" value="ECO:0000316"/>
    <property type="project" value="MGI"/>
</dbReference>
<dbReference type="GO" id="GO:0051301">
    <property type="term" value="P:cell division"/>
    <property type="evidence" value="ECO:0000315"/>
    <property type="project" value="MGI"/>
</dbReference>
<dbReference type="GO" id="GO:0045165">
    <property type="term" value="P:cell fate commitment"/>
    <property type="evidence" value="ECO:0000314"/>
    <property type="project" value="MGI"/>
</dbReference>
<dbReference type="GO" id="GO:0008283">
    <property type="term" value="P:cell population proliferation"/>
    <property type="evidence" value="ECO:0000315"/>
    <property type="project" value="MGI"/>
</dbReference>
<dbReference type="GO" id="GO:0007267">
    <property type="term" value="P:cell-cell signaling"/>
    <property type="evidence" value="ECO:0000315"/>
    <property type="project" value="MGI"/>
</dbReference>
<dbReference type="GO" id="GO:0060365">
    <property type="term" value="P:coronal suture morphogenesis"/>
    <property type="evidence" value="ECO:0000315"/>
    <property type="project" value="MGI"/>
</dbReference>
<dbReference type="GO" id="GO:0048565">
    <property type="term" value="P:digestive tract development"/>
    <property type="evidence" value="ECO:0000315"/>
    <property type="project" value="MGI"/>
</dbReference>
<dbReference type="GO" id="GO:0048557">
    <property type="term" value="P:embryonic digestive tract morphogenesis"/>
    <property type="evidence" value="ECO:0000315"/>
    <property type="project" value="MGI"/>
</dbReference>
<dbReference type="GO" id="GO:0048568">
    <property type="term" value="P:embryonic organ development"/>
    <property type="evidence" value="ECO:0000315"/>
    <property type="project" value="MGI"/>
</dbReference>
<dbReference type="GO" id="GO:0048562">
    <property type="term" value="P:embryonic organ morphogenesis"/>
    <property type="evidence" value="ECO:0000315"/>
    <property type="project" value="MGI"/>
</dbReference>
<dbReference type="GO" id="GO:0009880">
    <property type="term" value="P:embryonic pattern specification"/>
    <property type="evidence" value="ECO:0000315"/>
    <property type="project" value="MGI"/>
</dbReference>
<dbReference type="GO" id="GO:0061031">
    <property type="term" value="P:endodermal digestive tract morphogenesis"/>
    <property type="evidence" value="ECO:0000315"/>
    <property type="project" value="MGI"/>
</dbReference>
<dbReference type="GO" id="GO:0048730">
    <property type="term" value="P:epidermis morphogenesis"/>
    <property type="evidence" value="ECO:0000315"/>
    <property type="project" value="MGI"/>
</dbReference>
<dbReference type="GO" id="GO:0030855">
    <property type="term" value="P:epithelial cell differentiation"/>
    <property type="evidence" value="ECO:0000315"/>
    <property type="project" value="MGI"/>
</dbReference>
<dbReference type="GO" id="GO:0050673">
    <property type="term" value="P:epithelial cell proliferation"/>
    <property type="evidence" value="ECO:0000315"/>
    <property type="project" value="MGI"/>
</dbReference>
<dbReference type="GO" id="GO:0060664">
    <property type="term" value="P:epithelial cell proliferation involved in salivary gland morphogenesis"/>
    <property type="evidence" value="ECO:0000315"/>
    <property type="project" value="MGI"/>
</dbReference>
<dbReference type="GO" id="GO:0060441">
    <property type="term" value="P:epithelial tube branching involved in lung morphogenesis"/>
    <property type="evidence" value="ECO:0000315"/>
    <property type="project" value="MGI"/>
</dbReference>
<dbReference type="GO" id="GO:0070371">
    <property type="term" value="P:ERK1 and ERK2 cascade"/>
    <property type="evidence" value="ECO:0000316"/>
    <property type="project" value="MGI"/>
</dbReference>
<dbReference type="GO" id="GO:1902178">
    <property type="term" value="P:fibroblast growth factor receptor apoptotic signaling pathway"/>
    <property type="evidence" value="ECO:0000315"/>
    <property type="project" value="MGI"/>
</dbReference>
<dbReference type="GO" id="GO:0008543">
    <property type="term" value="P:fibroblast growth factor receptor signaling pathway"/>
    <property type="evidence" value="ECO:0000315"/>
    <property type="project" value="MGI"/>
</dbReference>
<dbReference type="GO" id="GO:0035603">
    <property type="term" value="P:fibroblast growth factor receptor signaling pathway involved in hemopoiesis"/>
    <property type="evidence" value="ECO:0000315"/>
    <property type="project" value="UniProtKB"/>
</dbReference>
<dbReference type="GO" id="GO:0060595">
    <property type="term" value="P:fibroblast growth factor receptor signaling pathway involved in mammary gland specification"/>
    <property type="evidence" value="ECO:0000315"/>
    <property type="project" value="MGI"/>
</dbReference>
<dbReference type="GO" id="GO:0035602">
    <property type="term" value="P:fibroblast growth factor receptor signaling pathway involved in negative regulation of apoptotic process in bone marrow cell"/>
    <property type="evidence" value="ECO:0000315"/>
    <property type="project" value="UniProtKB"/>
</dbReference>
<dbReference type="GO" id="GO:0035607">
    <property type="term" value="P:fibroblast growth factor receptor signaling pathway involved in orbitofrontal cortex development"/>
    <property type="evidence" value="ECO:0000315"/>
    <property type="project" value="UniProtKB"/>
</dbReference>
<dbReference type="GO" id="GO:0035604">
    <property type="term" value="P:fibroblast growth factor receptor signaling pathway involved in positive regulation of cell proliferation in bone marrow"/>
    <property type="evidence" value="ECO:0000315"/>
    <property type="project" value="UniProtKB"/>
</dbReference>
<dbReference type="GO" id="GO:0022612">
    <property type="term" value="P:gland morphogenesis"/>
    <property type="evidence" value="ECO:0000315"/>
    <property type="project" value="MGI"/>
</dbReference>
<dbReference type="GO" id="GO:0031069">
    <property type="term" value="P:hair follicle morphogenesis"/>
    <property type="evidence" value="ECO:0000315"/>
    <property type="project" value="MGI"/>
</dbReference>
<dbReference type="GO" id="GO:0001701">
    <property type="term" value="P:in utero embryonic development"/>
    <property type="evidence" value="ECO:0000315"/>
    <property type="project" value="MGI"/>
</dbReference>
<dbReference type="GO" id="GO:0042472">
    <property type="term" value="P:inner ear morphogenesis"/>
    <property type="evidence" value="ECO:0000315"/>
    <property type="project" value="MGI"/>
</dbReference>
<dbReference type="GO" id="GO:0032808">
    <property type="term" value="P:lacrimal gland development"/>
    <property type="evidence" value="ECO:0000315"/>
    <property type="project" value="MGI"/>
</dbReference>
<dbReference type="GO" id="GO:0060601">
    <property type="term" value="P:lateral sprouting from an epithelium"/>
    <property type="evidence" value="ECO:0000315"/>
    <property type="project" value="MGI"/>
</dbReference>
<dbReference type="GO" id="GO:0070307">
    <property type="term" value="P:lens fiber cell development"/>
    <property type="evidence" value="ECO:0000315"/>
    <property type="project" value="MGI"/>
</dbReference>
<dbReference type="GO" id="GO:0060174">
    <property type="term" value="P:limb bud formation"/>
    <property type="evidence" value="ECO:0000315"/>
    <property type="project" value="MGI"/>
</dbReference>
<dbReference type="GO" id="GO:0048286">
    <property type="term" value="P:lung alveolus development"/>
    <property type="evidence" value="ECO:0000315"/>
    <property type="project" value="MGI"/>
</dbReference>
<dbReference type="GO" id="GO:0030324">
    <property type="term" value="P:lung development"/>
    <property type="evidence" value="ECO:0000315"/>
    <property type="project" value="MGI"/>
</dbReference>
<dbReference type="GO" id="GO:0060463">
    <property type="term" value="P:lung lobe morphogenesis"/>
    <property type="evidence" value="ECO:0000315"/>
    <property type="project" value="MGI"/>
</dbReference>
<dbReference type="GO" id="GO:0060484">
    <property type="term" value="P:lung-associated mesenchyme development"/>
    <property type="evidence" value="ECO:0000315"/>
    <property type="project" value="MGI"/>
</dbReference>
<dbReference type="GO" id="GO:0060615">
    <property type="term" value="P:mammary gland bud formation"/>
    <property type="evidence" value="ECO:0000315"/>
    <property type="project" value="MGI"/>
</dbReference>
<dbReference type="GO" id="GO:0003149">
    <property type="term" value="P:membranous septum morphogenesis"/>
    <property type="evidence" value="ECO:0000315"/>
    <property type="project" value="MGI"/>
</dbReference>
<dbReference type="GO" id="GO:0048762">
    <property type="term" value="P:mesenchymal cell differentiation"/>
    <property type="evidence" value="ECO:0000316"/>
    <property type="project" value="MGI"/>
</dbReference>
<dbReference type="GO" id="GO:0060915">
    <property type="term" value="P:mesenchymal cell differentiation involved in lung development"/>
    <property type="evidence" value="ECO:0000316"/>
    <property type="project" value="MGI"/>
</dbReference>
<dbReference type="GO" id="GO:0010463">
    <property type="term" value="P:mesenchymal cell proliferation"/>
    <property type="evidence" value="ECO:0000316"/>
    <property type="project" value="MGI"/>
</dbReference>
<dbReference type="GO" id="GO:0060916">
    <property type="term" value="P:mesenchymal cell proliferation involved in lung development"/>
    <property type="evidence" value="ECO:0000315"/>
    <property type="project" value="MGI"/>
</dbReference>
<dbReference type="GO" id="GO:0030901">
    <property type="term" value="P:midbrain development"/>
    <property type="evidence" value="ECO:0000316"/>
    <property type="project" value="MGI"/>
</dbReference>
<dbReference type="GO" id="GO:0140014">
    <property type="term" value="P:mitotic nuclear division"/>
    <property type="evidence" value="ECO:0000316"/>
    <property type="project" value="MGI"/>
</dbReference>
<dbReference type="GO" id="GO:0016331">
    <property type="term" value="P:morphogenesis of embryonic epithelium"/>
    <property type="evidence" value="ECO:0000315"/>
    <property type="project" value="MGI"/>
</dbReference>
<dbReference type="GO" id="GO:0050680">
    <property type="term" value="P:negative regulation of epithelial cell proliferation"/>
    <property type="evidence" value="ECO:0000316"/>
    <property type="project" value="MGI"/>
</dbReference>
<dbReference type="GO" id="GO:0045839">
    <property type="term" value="P:negative regulation of mitotic nuclear division"/>
    <property type="evidence" value="ECO:0000316"/>
    <property type="project" value="MGI"/>
</dbReference>
<dbReference type="GO" id="GO:0000122">
    <property type="term" value="P:negative regulation of transcription by RNA polymerase II"/>
    <property type="evidence" value="ECO:0000315"/>
    <property type="project" value="MGI"/>
</dbReference>
<dbReference type="GO" id="GO:0007528">
    <property type="term" value="P:neuromuscular junction development"/>
    <property type="evidence" value="ECO:0000315"/>
    <property type="project" value="MGI"/>
</dbReference>
<dbReference type="GO" id="GO:0042476">
    <property type="term" value="P:odontogenesis"/>
    <property type="evidence" value="ECO:0000315"/>
    <property type="project" value="MGI"/>
</dbReference>
<dbReference type="GO" id="GO:0021769">
    <property type="term" value="P:orbitofrontal cortex development"/>
    <property type="evidence" value="ECO:0000315"/>
    <property type="project" value="UniProtKB"/>
</dbReference>
<dbReference type="GO" id="GO:0035265">
    <property type="term" value="P:organ growth"/>
    <property type="evidence" value="ECO:0000315"/>
    <property type="project" value="MGI"/>
</dbReference>
<dbReference type="GO" id="GO:0030916">
    <property type="term" value="P:otic vesicle formation"/>
    <property type="evidence" value="ECO:0000315"/>
    <property type="project" value="MGI"/>
</dbReference>
<dbReference type="GO" id="GO:0003148">
    <property type="term" value="P:outflow tract septum morphogenesis"/>
    <property type="evidence" value="ECO:0000315"/>
    <property type="project" value="MGI"/>
</dbReference>
<dbReference type="GO" id="GO:0090263">
    <property type="term" value="P:positive regulation of canonical Wnt signaling pathway"/>
    <property type="evidence" value="ECO:0000315"/>
    <property type="project" value="MGI"/>
</dbReference>
<dbReference type="GO" id="GO:0060045">
    <property type="term" value="P:positive regulation of cardiac muscle cell proliferation"/>
    <property type="evidence" value="ECO:0000316"/>
    <property type="project" value="MGI"/>
</dbReference>
<dbReference type="GO" id="GO:0045787">
    <property type="term" value="P:positive regulation of cell cycle"/>
    <property type="evidence" value="ECO:0000315"/>
    <property type="project" value="UniProtKB"/>
</dbReference>
<dbReference type="GO" id="GO:0051781">
    <property type="term" value="P:positive regulation of cell division"/>
    <property type="evidence" value="ECO:0000315"/>
    <property type="project" value="MGI"/>
</dbReference>
<dbReference type="GO" id="GO:0008284">
    <property type="term" value="P:positive regulation of cell population proliferation"/>
    <property type="evidence" value="ECO:0000315"/>
    <property type="project" value="UniProtKB"/>
</dbReference>
<dbReference type="GO" id="GO:0050679">
    <property type="term" value="P:positive regulation of epithelial cell proliferation"/>
    <property type="evidence" value="ECO:0000315"/>
    <property type="project" value="MGI"/>
</dbReference>
<dbReference type="GO" id="GO:0060501">
    <property type="term" value="P:positive regulation of epithelial cell proliferation involved in lung morphogenesis"/>
    <property type="evidence" value="ECO:0000315"/>
    <property type="project" value="MGI"/>
</dbReference>
<dbReference type="GO" id="GO:0070374">
    <property type="term" value="P:positive regulation of ERK1 and ERK2 cascade"/>
    <property type="evidence" value="ECO:0000316"/>
    <property type="project" value="MGI"/>
</dbReference>
<dbReference type="GO" id="GO:0010628">
    <property type="term" value="P:positive regulation of gene expression"/>
    <property type="evidence" value="ECO:0000315"/>
    <property type="project" value="MGI"/>
</dbReference>
<dbReference type="GO" id="GO:0002053">
    <property type="term" value="P:positive regulation of mesenchymal cell proliferation"/>
    <property type="evidence" value="ECO:0000316"/>
    <property type="project" value="MGI"/>
</dbReference>
<dbReference type="GO" id="GO:2000648">
    <property type="term" value="P:positive regulation of stem cell proliferation"/>
    <property type="evidence" value="ECO:0000315"/>
    <property type="project" value="MGI"/>
</dbReference>
<dbReference type="GO" id="GO:0045944">
    <property type="term" value="P:positive regulation of transcription by RNA polymerase II"/>
    <property type="evidence" value="ECO:0000315"/>
    <property type="project" value="UniProtKB"/>
</dbReference>
<dbReference type="GO" id="GO:0050677">
    <property type="term" value="P:positive regulation of urothelial cell proliferation"/>
    <property type="evidence" value="ECO:0000315"/>
    <property type="project" value="MGI"/>
</dbReference>
<dbReference type="GO" id="GO:0030177">
    <property type="term" value="P:positive regulation of Wnt signaling pathway"/>
    <property type="evidence" value="ECO:0000315"/>
    <property type="project" value="MGI"/>
</dbReference>
<dbReference type="GO" id="GO:0009791">
    <property type="term" value="P:post-embryonic development"/>
    <property type="evidence" value="ECO:0000315"/>
    <property type="project" value="MGI"/>
</dbReference>
<dbReference type="GO" id="GO:0060527">
    <property type="term" value="P:prostate epithelial cord arborization involved in prostate glandular acinus morphogenesis"/>
    <property type="evidence" value="ECO:0000315"/>
    <property type="project" value="MGI"/>
</dbReference>
<dbReference type="GO" id="GO:0060523">
    <property type="term" value="P:prostate epithelial cord elongation"/>
    <property type="evidence" value="ECO:0000315"/>
    <property type="project" value="MGI"/>
</dbReference>
<dbReference type="GO" id="GO:0060512">
    <property type="term" value="P:prostate gland morphogenesis"/>
    <property type="evidence" value="ECO:0000315"/>
    <property type="project" value="MGI"/>
</dbReference>
<dbReference type="GO" id="GO:0021860">
    <property type="term" value="P:pyramidal neuron development"/>
    <property type="evidence" value="ECO:0000315"/>
    <property type="project" value="UniProtKB"/>
</dbReference>
<dbReference type="GO" id="GO:0050678">
    <property type="term" value="P:regulation of epithelial cell proliferation"/>
    <property type="evidence" value="ECO:0000315"/>
    <property type="project" value="MGI"/>
</dbReference>
<dbReference type="GO" id="GO:0070372">
    <property type="term" value="P:regulation of ERK1 and ERK2 cascade"/>
    <property type="evidence" value="ECO:0000315"/>
    <property type="project" value="MGI"/>
</dbReference>
<dbReference type="GO" id="GO:0060688">
    <property type="term" value="P:regulation of morphogenesis of a branching structure"/>
    <property type="evidence" value="ECO:0000315"/>
    <property type="project" value="MGI"/>
</dbReference>
<dbReference type="GO" id="GO:0033688">
    <property type="term" value="P:regulation of osteoblast proliferation"/>
    <property type="evidence" value="ECO:0000315"/>
    <property type="project" value="MGI"/>
</dbReference>
<dbReference type="GO" id="GO:0051150">
    <property type="term" value="P:regulation of smooth muscle cell differentiation"/>
    <property type="evidence" value="ECO:0000315"/>
    <property type="project" value="MGI"/>
</dbReference>
<dbReference type="GO" id="GO:0008589">
    <property type="term" value="P:regulation of smoothened signaling pathway"/>
    <property type="evidence" value="ECO:0000315"/>
    <property type="project" value="MGI"/>
</dbReference>
<dbReference type="GO" id="GO:0048608">
    <property type="term" value="P:reproductive structure development"/>
    <property type="evidence" value="ECO:0000315"/>
    <property type="project" value="MGI"/>
</dbReference>
<dbReference type="GO" id="GO:0060529">
    <property type="term" value="P:squamous basal epithelial stem cell differentiation involved in prostate gland acinus development"/>
    <property type="evidence" value="ECO:0000315"/>
    <property type="project" value="MGI"/>
</dbReference>
<dbReference type="GO" id="GO:0048863">
    <property type="term" value="P:stem cell differentiation"/>
    <property type="evidence" value="ECO:0000316"/>
    <property type="project" value="MGI"/>
</dbReference>
<dbReference type="GO" id="GO:0072089">
    <property type="term" value="P:stem cell proliferation"/>
    <property type="evidence" value="ECO:0000315"/>
    <property type="project" value="MGI"/>
</dbReference>
<dbReference type="GO" id="GO:0048489">
    <property type="term" value="P:synaptic vesicle transport"/>
    <property type="evidence" value="ECO:0000315"/>
    <property type="project" value="MGI"/>
</dbReference>
<dbReference type="GO" id="GO:0001657">
    <property type="term" value="P:ureteric bud development"/>
    <property type="evidence" value="ECO:0000316"/>
    <property type="project" value="MGI"/>
</dbReference>
<dbReference type="GO" id="GO:0050674">
    <property type="term" value="P:urothelial cell proliferation"/>
    <property type="evidence" value="ECO:0000315"/>
    <property type="project" value="MGI"/>
</dbReference>
<dbReference type="GO" id="GO:0060979">
    <property type="term" value="P:vasculogenesis involved in coronary vascular morphogenesis"/>
    <property type="evidence" value="ECO:0000304"/>
    <property type="project" value="DFLAT"/>
</dbReference>
<dbReference type="GO" id="GO:0055010">
    <property type="term" value="P:ventricular cardiac muscle tissue morphogenesis"/>
    <property type="evidence" value="ECO:0000315"/>
    <property type="project" value="MGI"/>
</dbReference>
<dbReference type="GO" id="GO:0021847">
    <property type="term" value="P:ventricular zone neuroblast division"/>
    <property type="evidence" value="ECO:0000315"/>
    <property type="project" value="UniProtKB"/>
</dbReference>
<dbReference type="CDD" id="cd05857">
    <property type="entry name" value="IgI_2_FGFR"/>
    <property type="match status" value="1"/>
</dbReference>
<dbReference type="CDD" id="cd05858">
    <property type="entry name" value="IgI_3_FGFR2"/>
    <property type="match status" value="1"/>
</dbReference>
<dbReference type="CDD" id="cd05101">
    <property type="entry name" value="PTKc_FGFR2"/>
    <property type="match status" value="1"/>
</dbReference>
<dbReference type="FunFam" id="1.10.510.10:FF:000007">
    <property type="entry name" value="Fibroblast growth factor receptor"/>
    <property type="match status" value="1"/>
</dbReference>
<dbReference type="FunFam" id="2.60.40.10:FF:000016">
    <property type="entry name" value="Fibroblast growth factor receptor"/>
    <property type="match status" value="1"/>
</dbReference>
<dbReference type="FunFam" id="2.60.40.10:FF:000020">
    <property type="entry name" value="Fibroblast growth factor receptor"/>
    <property type="match status" value="1"/>
</dbReference>
<dbReference type="FunFam" id="2.60.40.10:FF:000252">
    <property type="entry name" value="Fibroblast growth factor receptor"/>
    <property type="match status" value="1"/>
</dbReference>
<dbReference type="FunFam" id="3.30.200.20:FF:000011">
    <property type="entry name" value="Fibroblast growth factor receptor"/>
    <property type="match status" value="1"/>
</dbReference>
<dbReference type="Gene3D" id="2.60.40.10">
    <property type="entry name" value="Immunoglobulins"/>
    <property type="match status" value="3"/>
</dbReference>
<dbReference type="Gene3D" id="3.30.200.20">
    <property type="entry name" value="Phosphorylase Kinase, domain 1"/>
    <property type="match status" value="1"/>
</dbReference>
<dbReference type="Gene3D" id="1.10.510.10">
    <property type="entry name" value="Transferase(Phosphotransferase) domain 1"/>
    <property type="match status" value="1"/>
</dbReference>
<dbReference type="InterPro" id="IPR016248">
    <property type="entry name" value="FGF_rcpt_fam"/>
</dbReference>
<dbReference type="InterPro" id="IPR007110">
    <property type="entry name" value="Ig-like_dom"/>
</dbReference>
<dbReference type="InterPro" id="IPR036179">
    <property type="entry name" value="Ig-like_dom_sf"/>
</dbReference>
<dbReference type="InterPro" id="IPR013783">
    <property type="entry name" value="Ig-like_fold"/>
</dbReference>
<dbReference type="InterPro" id="IPR013098">
    <property type="entry name" value="Ig_I-set"/>
</dbReference>
<dbReference type="InterPro" id="IPR003599">
    <property type="entry name" value="Ig_sub"/>
</dbReference>
<dbReference type="InterPro" id="IPR003598">
    <property type="entry name" value="Ig_sub2"/>
</dbReference>
<dbReference type="InterPro" id="IPR011009">
    <property type="entry name" value="Kinase-like_dom_sf"/>
</dbReference>
<dbReference type="InterPro" id="IPR000719">
    <property type="entry name" value="Prot_kinase_dom"/>
</dbReference>
<dbReference type="InterPro" id="IPR017441">
    <property type="entry name" value="Protein_kinase_ATP_BS"/>
</dbReference>
<dbReference type="InterPro" id="IPR050122">
    <property type="entry name" value="RTK"/>
</dbReference>
<dbReference type="InterPro" id="IPR001245">
    <property type="entry name" value="Ser-Thr/Tyr_kinase_cat_dom"/>
</dbReference>
<dbReference type="InterPro" id="IPR008266">
    <property type="entry name" value="Tyr_kinase_AS"/>
</dbReference>
<dbReference type="InterPro" id="IPR020635">
    <property type="entry name" value="Tyr_kinase_cat_dom"/>
</dbReference>
<dbReference type="PANTHER" id="PTHR24416:SF130">
    <property type="entry name" value="FIBROBLAST GROWTH FACTOR RECEPTOR 2"/>
    <property type="match status" value="1"/>
</dbReference>
<dbReference type="PANTHER" id="PTHR24416">
    <property type="entry name" value="TYROSINE-PROTEIN KINASE RECEPTOR"/>
    <property type="match status" value="1"/>
</dbReference>
<dbReference type="Pfam" id="PF07679">
    <property type="entry name" value="I-set"/>
    <property type="match status" value="1"/>
</dbReference>
<dbReference type="Pfam" id="PF13927">
    <property type="entry name" value="Ig_3"/>
    <property type="match status" value="2"/>
</dbReference>
<dbReference type="Pfam" id="PF07714">
    <property type="entry name" value="PK_Tyr_Ser-Thr"/>
    <property type="match status" value="1"/>
</dbReference>
<dbReference type="PIRSF" id="PIRSF000628">
    <property type="entry name" value="FGFR"/>
    <property type="match status" value="1"/>
</dbReference>
<dbReference type="PRINTS" id="PR00109">
    <property type="entry name" value="TYRKINASE"/>
</dbReference>
<dbReference type="SMART" id="SM00409">
    <property type="entry name" value="IG"/>
    <property type="match status" value="3"/>
</dbReference>
<dbReference type="SMART" id="SM00408">
    <property type="entry name" value="IGc2"/>
    <property type="match status" value="3"/>
</dbReference>
<dbReference type="SMART" id="SM00219">
    <property type="entry name" value="TyrKc"/>
    <property type="match status" value="1"/>
</dbReference>
<dbReference type="SUPFAM" id="SSF48726">
    <property type="entry name" value="Immunoglobulin"/>
    <property type="match status" value="3"/>
</dbReference>
<dbReference type="SUPFAM" id="SSF56112">
    <property type="entry name" value="Protein kinase-like (PK-like)"/>
    <property type="match status" value="1"/>
</dbReference>
<dbReference type="PROSITE" id="PS50835">
    <property type="entry name" value="IG_LIKE"/>
    <property type="match status" value="3"/>
</dbReference>
<dbReference type="PROSITE" id="PS00107">
    <property type="entry name" value="PROTEIN_KINASE_ATP"/>
    <property type="match status" value="1"/>
</dbReference>
<dbReference type="PROSITE" id="PS50011">
    <property type="entry name" value="PROTEIN_KINASE_DOM"/>
    <property type="match status" value="1"/>
</dbReference>
<dbReference type="PROSITE" id="PS00109">
    <property type="entry name" value="PROTEIN_KINASE_TYR"/>
    <property type="match status" value="1"/>
</dbReference>
<gene>
    <name type="primary">Fgfr2</name>
    <name type="synonym">Bek</name>
    <name type="synonym">Ect1</name>
</gene>
<name>FGFR2_MOUSE</name>
<protein>
    <recommendedName>
        <fullName>Fibroblast growth factor receptor 2</fullName>
        <shortName>FGFR-2</shortName>
        <ecNumber>2.7.10.1</ecNumber>
    </recommendedName>
    <alternativeName>
        <fullName>Keratinocyte growth factor receptor</fullName>
        <shortName>KGFR</shortName>
    </alternativeName>
    <cdAntigenName>CD332</cdAntigenName>
</protein>
<sequence length="821" mass="91984">MVSWGRFICLVLVTMATLSLARPSFSLVEDTTLEPEEPPTKYQISQPEAYVVAPGESLELQCMLKDAAVISWTKDGVHLGPNNRTVLIGEYLQIKGATPRDSGLYACTAARTVDSETWIFMVNVTDAISSGDDEDDTDSSEDVVSENRSNQRAPYWTNTEKMEKRLHACPAANTVKFRCPAGGNPTSTMRWLKNGKEFKQEHRIGGYKVRNQHWSLIMESVVPSDKGNYTCLVENEYGSINHTYHLDVVERSPHRPILQAGLPANASTVVGGDVEFVCKVYSDAQPHIQWIKHVEKNGSKNGPDGLPYLKVLKAAGVNTTDKEIEVLYIRNVTFEDAGEYTCLAGNSIGISFHSAWLTVLPAPVREKEITASPDYLEIAIYCIGVFLIACMVVTVIFCRMKTTTKKPDFSSQPAVHKLTKRIPLRRQVTVSAESSSSMNSNTPLVRITTRLSSTADTPMLAGVSEYELPEDPKWEFPRDKLTLGKPLGEGCFGQVVMAEAVGIDKDKPKEAVTVAVKMLKDDATEKDLSDLVSEMEMMKMIGKHKNIINLLGACTQDGPLYVIVEYASKGNLREYLRARRPPGMEYSYDINRVPEEQMTFKDLVSCTYQLARGMEYLASQKCIHRDLAARNVLVTENNVMKIADFGLARDINNIDYYKKTTNGRLPVKWMAPEALFDRVYTHQSDVWSFGVLMWEIFTLGGSPYPGIPVEELFKLLKEGHRMDKPTNCTNELYMMMRDCWHAVPSQRPTFKQLVEDLDRILTLTTNEEYLDLTQPLEQYSPSYPDTSSSCSSGDDSVFSPDPMPYEPCLPQYPHINGSVKT</sequence>
<evidence type="ECO:0000250" key="1"/>
<evidence type="ECO:0000250" key="2">
    <source>
        <dbReference type="UniProtKB" id="P21802"/>
    </source>
</evidence>
<evidence type="ECO:0000255" key="3"/>
<evidence type="ECO:0000255" key="4">
    <source>
        <dbReference type="PROSITE-ProRule" id="PRU00114"/>
    </source>
</evidence>
<evidence type="ECO:0000255" key="5">
    <source>
        <dbReference type="PROSITE-ProRule" id="PRU00159"/>
    </source>
</evidence>
<evidence type="ECO:0000255" key="6">
    <source>
        <dbReference type="PROSITE-ProRule" id="PRU10028"/>
    </source>
</evidence>
<evidence type="ECO:0000256" key="7">
    <source>
        <dbReference type="SAM" id="MobiDB-lite"/>
    </source>
</evidence>
<evidence type="ECO:0000269" key="8">
    <source>
    </source>
</evidence>
<evidence type="ECO:0000269" key="9">
    <source>
    </source>
</evidence>
<evidence type="ECO:0000269" key="10">
    <source>
    </source>
</evidence>
<evidence type="ECO:0000269" key="11">
    <source>
    </source>
</evidence>
<evidence type="ECO:0000269" key="12">
    <source>
    </source>
</evidence>
<evidence type="ECO:0000269" key="13">
    <source>
    </source>
</evidence>
<evidence type="ECO:0000269" key="14">
    <source>
    </source>
</evidence>
<evidence type="ECO:0000269" key="15">
    <source>
    </source>
</evidence>
<evidence type="ECO:0000269" key="16">
    <source>
    </source>
</evidence>
<evidence type="ECO:0000303" key="17">
    <source>
    </source>
</evidence>
<evidence type="ECO:0000305" key="18"/>
<evidence type="ECO:0007829" key="19">
    <source>
        <dbReference type="PDB" id="4HWU"/>
    </source>
</evidence>
<organism>
    <name type="scientific">Mus musculus</name>
    <name type="common">Mouse</name>
    <dbReference type="NCBI Taxonomy" id="10090"/>
    <lineage>
        <taxon>Eukaryota</taxon>
        <taxon>Metazoa</taxon>
        <taxon>Chordata</taxon>
        <taxon>Craniata</taxon>
        <taxon>Vertebrata</taxon>
        <taxon>Euteleostomi</taxon>
        <taxon>Mammalia</taxon>
        <taxon>Eutheria</taxon>
        <taxon>Euarchontoglires</taxon>
        <taxon>Glires</taxon>
        <taxon>Rodentia</taxon>
        <taxon>Myomorpha</taxon>
        <taxon>Muroidea</taxon>
        <taxon>Muridae</taxon>
        <taxon>Murinae</taxon>
        <taxon>Mus</taxon>
        <taxon>Mus</taxon>
    </lineage>
</organism>
<keyword id="KW-0002">3D-structure</keyword>
<keyword id="KW-0025">Alternative splicing</keyword>
<keyword id="KW-0053">Apoptosis</keyword>
<keyword id="KW-0067">ATP-binding</keyword>
<keyword id="KW-1003">Cell membrane</keyword>
<keyword id="KW-0968">Cytoplasmic vesicle</keyword>
<keyword id="KW-1015">Disulfide bond</keyword>
<keyword id="KW-0325">Glycoprotein</keyword>
<keyword id="KW-0333">Golgi apparatus</keyword>
<keyword id="KW-0358">Heparin-binding</keyword>
<keyword id="KW-0393">Immunoglobulin domain</keyword>
<keyword id="KW-0418">Kinase</keyword>
<keyword id="KW-0472">Membrane</keyword>
<keyword id="KW-0547">Nucleotide-binding</keyword>
<keyword id="KW-0597">Phosphoprotein</keyword>
<keyword id="KW-0656">Proto-oncogene</keyword>
<keyword id="KW-0675">Receptor</keyword>
<keyword id="KW-1185">Reference proteome</keyword>
<keyword id="KW-0677">Repeat</keyword>
<keyword id="KW-0732">Signal</keyword>
<keyword id="KW-0808">Transferase</keyword>
<keyword id="KW-0812">Transmembrane</keyword>
<keyword id="KW-1133">Transmembrane helix</keyword>
<keyword id="KW-0829">Tyrosine-protein kinase</keyword>
<keyword id="KW-0832">Ubl conjugation</keyword>
<feature type="signal peptide">
    <location>
        <begin position="1"/>
        <end position="21"/>
    </location>
</feature>
<feature type="chain" id="PRO_0000016784" description="Fibroblast growth factor receptor 2">
    <location>
        <begin position="22"/>
        <end position="821"/>
    </location>
</feature>
<feature type="topological domain" description="Extracellular" evidence="3">
    <location>
        <begin position="22"/>
        <end position="377"/>
    </location>
</feature>
<feature type="transmembrane region" description="Helical" evidence="3">
    <location>
        <begin position="378"/>
        <end position="398"/>
    </location>
</feature>
<feature type="topological domain" description="Cytoplasmic" evidence="3">
    <location>
        <begin position="399"/>
        <end position="821"/>
    </location>
</feature>
<feature type="domain" description="Ig-like C2-type 1">
    <location>
        <begin position="25"/>
        <end position="125"/>
    </location>
</feature>
<feature type="domain" description="Ig-like C2-type 2">
    <location>
        <begin position="154"/>
        <end position="247"/>
    </location>
</feature>
<feature type="domain" description="Ig-like C2-type 3">
    <location>
        <begin position="256"/>
        <end position="358"/>
    </location>
</feature>
<feature type="domain" description="Protein kinase" evidence="5">
    <location>
        <begin position="481"/>
        <end position="770"/>
    </location>
</feature>
<feature type="region of interest" description="Disordered" evidence="7">
    <location>
        <begin position="129"/>
        <end position="151"/>
    </location>
</feature>
<feature type="region of interest" description="Heparin-binding" evidence="1">
    <location>
        <begin position="161"/>
        <end position="178"/>
    </location>
</feature>
<feature type="compositionally biased region" description="Acidic residues" evidence="7">
    <location>
        <begin position="131"/>
        <end position="144"/>
    </location>
</feature>
<feature type="active site" description="Proton acceptor" evidence="5 6">
    <location>
        <position position="626"/>
    </location>
</feature>
<feature type="binding site" evidence="5">
    <location>
        <begin position="487"/>
        <end position="495"/>
    </location>
    <ligand>
        <name>ATP</name>
        <dbReference type="ChEBI" id="CHEBI:30616"/>
    </ligand>
</feature>
<feature type="binding site" evidence="5">
    <location>
        <position position="517"/>
    </location>
    <ligand>
        <name>ATP</name>
        <dbReference type="ChEBI" id="CHEBI:30616"/>
    </ligand>
</feature>
<feature type="binding site" evidence="5">
    <location>
        <begin position="565"/>
        <end position="567"/>
    </location>
    <ligand>
        <name>ATP</name>
        <dbReference type="ChEBI" id="CHEBI:30616"/>
    </ligand>
</feature>
<feature type="binding site" evidence="5">
    <location>
        <position position="571"/>
    </location>
    <ligand>
        <name>ATP</name>
        <dbReference type="ChEBI" id="CHEBI:30616"/>
    </ligand>
</feature>
<feature type="modified residue" description="Phosphotyrosine; by autocatalysis" evidence="2">
    <location>
        <position position="466"/>
    </location>
</feature>
<feature type="modified residue" description="Phosphotyrosine; by autocatalysis" evidence="2">
    <location>
        <position position="586"/>
    </location>
</feature>
<feature type="modified residue" description="Phosphotyrosine; by autocatalysis" evidence="2">
    <location>
        <position position="588"/>
    </location>
</feature>
<feature type="modified residue" description="Phosphotyrosine; by autocatalysis" evidence="2">
    <location>
        <position position="656"/>
    </location>
</feature>
<feature type="modified residue" description="Phosphotyrosine; by autocatalysis" evidence="2">
    <location>
        <position position="657"/>
    </location>
</feature>
<feature type="modified residue" description="Phosphotyrosine; by autocatalysis" evidence="2">
    <location>
        <position position="769"/>
    </location>
</feature>
<feature type="modified residue" description="Phosphoserine" evidence="2">
    <location>
        <position position="780"/>
    </location>
</feature>
<feature type="glycosylation site" description="N-linked (GlcNAc...) asparagine" evidence="3">
    <location>
        <position position="83"/>
    </location>
</feature>
<feature type="glycosylation site" description="N-linked (GlcNAc...) asparagine" evidence="3">
    <location>
        <position position="123"/>
    </location>
</feature>
<feature type="glycosylation site" description="N-linked (GlcNAc...) asparagine" evidence="3">
    <location>
        <position position="147"/>
    </location>
</feature>
<feature type="glycosylation site" description="N-linked (GlcNAc...) asparagine" evidence="3">
    <location>
        <position position="228"/>
    </location>
</feature>
<feature type="glycosylation site" description="N-linked (GlcNAc...) asparagine" evidence="3">
    <location>
        <position position="241"/>
    </location>
</feature>
<feature type="glycosylation site" description="N-linked (GlcNAc...) asparagine" evidence="3">
    <location>
        <position position="265"/>
    </location>
</feature>
<feature type="glycosylation site" description="N-linked (GlcNAc...) asparagine" evidence="3">
    <location>
        <position position="297"/>
    </location>
</feature>
<feature type="glycosylation site" description="N-linked (GlcNAc...) asparagine" evidence="3">
    <location>
        <position position="318"/>
    </location>
</feature>
<feature type="glycosylation site" description="N-linked (GlcNAc...) asparagine" evidence="3">
    <location>
        <position position="331"/>
    </location>
</feature>
<feature type="disulfide bond" evidence="4">
    <location>
        <begin position="62"/>
        <end position="107"/>
    </location>
</feature>
<feature type="disulfide bond" evidence="4">
    <location>
        <begin position="179"/>
        <end position="231"/>
    </location>
</feature>
<feature type="disulfide bond" evidence="4">
    <location>
        <begin position="278"/>
        <end position="342"/>
    </location>
</feature>
<feature type="splice variant" id="VSP_002985" description="In isoform Short." evidence="17">
    <original>E</original>
    <variation>G</variation>
    <location>
        <position position="37"/>
    </location>
</feature>
<feature type="splice variant" id="VSP_002986" description="In isoform Short." evidence="17">
    <location>
        <begin position="38"/>
        <end position="152"/>
    </location>
</feature>
<feature type="splice variant" id="VSP_002987" description="In isoform Short." evidence="17">
    <original>AAGVNTTDKEIEVLYIRNVTFEDAGEYTCLAGNSIGISFHSAWLTVLP</original>
    <variation>HSGINSSNAEVLALFNVTEMDAGEYICKVSNYIGQANQSAWLTVLPKQQ</variation>
    <location>
        <begin position="314"/>
        <end position="361"/>
    </location>
</feature>
<feature type="mutagenesis site" description="Abolishes phosphorylation of FRS2 and activation of MAP kinases." evidence="11">
    <original>Y</original>
    <variation>F</variation>
    <location>
        <position position="769"/>
    </location>
</feature>
<feature type="sequence conflict" description="In Ref. 1; CAA39083." evidence="18" ref="1">
    <original>A</original>
    <variation>V</variation>
    <location>
        <position position="53"/>
    </location>
</feature>
<feature type="sequence conflict" description="In Ref. 1; CAA39083." evidence="18" ref="1">
    <original>GE</original>
    <variation>RG</variation>
    <location>
        <begin position="55"/>
        <end position="56"/>
    </location>
</feature>
<feature type="sequence conflict" description="In Ref. 1; CAA39083." evidence="18" ref="1">
    <original>E</original>
    <variation>R</variation>
    <location>
        <position position="90"/>
    </location>
</feature>
<feature type="sequence conflict" description="In Ref. 1; CAA39083." evidence="18" ref="1">
    <original>I</original>
    <variation>Y</variation>
    <location>
        <position position="119"/>
    </location>
</feature>
<feature type="sequence conflict" description="In Ref. 1; CAA39083." evidence="18" ref="1">
    <original>DV</original>
    <variation>R</variation>
    <location>
        <begin position="142"/>
        <end position="143"/>
    </location>
</feature>
<feature type="sequence conflict" description="In Ref. 1; CAA39083 and 2; AAA39377." evidence="18" ref="1 2">
    <original>C</original>
    <variation>V</variation>
    <location>
        <position position="169"/>
    </location>
</feature>
<feature type="sequence conflict" description="In Ref. 1; CAA39083 and 2; AAA39377." evidence="18" ref="1 2">
    <original>S</original>
    <variation>P</variation>
    <location>
        <position position="187"/>
    </location>
</feature>
<feature type="sequence conflict" description="In Ref. 1; CAA39083." evidence="18" ref="1">
    <original>W</original>
    <variation>R</variation>
    <location>
        <position position="214"/>
    </location>
</feature>
<feature type="sequence conflict" description="In Ref. 1; CAA39083." evidence="18" ref="1">
    <original>Y</original>
    <variation>I</variation>
    <location>
        <position position="229"/>
    </location>
</feature>
<feature type="sequence conflict" description="In Ref. 1; CAA39083." evidence="18" ref="1">
    <original>E</original>
    <variation>R</variation>
    <location>
        <position position="275"/>
    </location>
</feature>
<feature type="sequence conflict" description="In Ref. 1; CAA39083 and 2; AAA39377." evidence="18" ref="1 2">
    <original>N</original>
    <variation>Y</variation>
    <location>
        <position position="301"/>
    </location>
</feature>
<feature type="strand" evidence="19">
    <location>
        <begin position="48"/>
        <end position="52"/>
    </location>
</feature>
<feature type="strand" evidence="19">
    <location>
        <begin position="58"/>
        <end position="61"/>
    </location>
</feature>
<feature type="strand" evidence="19">
    <location>
        <begin position="69"/>
        <end position="74"/>
    </location>
</feature>
<feature type="strand" evidence="19">
    <location>
        <begin position="77"/>
        <end position="79"/>
    </location>
</feature>
<feature type="strand" evidence="19">
    <location>
        <begin position="83"/>
        <end position="88"/>
    </location>
</feature>
<feature type="strand" evidence="19">
    <location>
        <begin position="91"/>
        <end position="94"/>
    </location>
</feature>
<feature type="helix" evidence="19">
    <location>
        <begin position="99"/>
        <end position="101"/>
    </location>
</feature>
<feature type="strand" evidence="19">
    <location>
        <begin position="103"/>
        <end position="110"/>
    </location>
</feature>
<feature type="strand" evidence="19">
    <location>
        <begin position="115"/>
        <end position="124"/>
    </location>
</feature>
<accession>P21803</accession>
<accession>O55141</accession>
<accession>Q00389</accession>
<accession>Q61342</accession>